<feature type="chain" id="PRO_1000060444" description="UPF0178 protein BRADO3147">
    <location>
        <begin position="1"/>
        <end position="164"/>
    </location>
</feature>
<name>Y3147_BRASO</name>
<gene>
    <name type="ordered locus">BRADO3147</name>
</gene>
<organism>
    <name type="scientific">Bradyrhizobium sp. (strain ORS 278)</name>
    <dbReference type="NCBI Taxonomy" id="114615"/>
    <lineage>
        <taxon>Bacteria</taxon>
        <taxon>Pseudomonadati</taxon>
        <taxon>Pseudomonadota</taxon>
        <taxon>Alphaproteobacteria</taxon>
        <taxon>Hyphomicrobiales</taxon>
        <taxon>Nitrobacteraceae</taxon>
        <taxon>Bradyrhizobium</taxon>
    </lineage>
</organism>
<reference key="1">
    <citation type="journal article" date="2007" name="Science">
        <title>Legumes symbioses: absence of nod genes in photosynthetic bradyrhizobia.</title>
        <authorList>
            <person name="Giraud E."/>
            <person name="Moulin L."/>
            <person name="Vallenet D."/>
            <person name="Barbe V."/>
            <person name="Cytryn E."/>
            <person name="Avarre J.-C."/>
            <person name="Jaubert M."/>
            <person name="Simon D."/>
            <person name="Cartieaux F."/>
            <person name="Prin Y."/>
            <person name="Bena G."/>
            <person name="Hannibal L."/>
            <person name="Fardoux J."/>
            <person name="Kojadinovic M."/>
            <person name="Vuillet L."/>
            <person name="Lajus A."/>
            <person name="Cruveiller S."/>
            <person name="Rouy Z."/>
            <person name="Mangenot S."/>
            <person name="Segurens B."/>
            <person name="Dossat C."/>
            <person name="Franck W.L."/>
            <person name="Chang W.-S."/>
            <person name="Saunders E."/>
            <person name="Bruce D."/>
            <person name="Richardson P."/>
            <person name="Normand P."/>
            <person name="Dreyfus B."/>
            <person name="Pignol D."/>
            <person name="Stacey G."/>
            <person name="Emerich D."/>
            <person name="Vermeglio A."/>
            <person name="Medigue C."/>
            <person name="Sadowsky M."/>
        </authorList>
    </citation>
    <scope>NUCLEOTIDE SEQUENCE [LARGE SCALE GENOMIC DNA]</scope>
    <source>
        <strain>ORS 278</strain>
    </source>
</reference>
<accession>A4YSR9</accession>
<comment type="similarity">
    <text evidence="1">Belongs to the UPF0178 family.</text>
</comment>
<dbReference type="EMBL" id="CU234118">
    <property type="protein sequence ID" value="CAL76945.1"/>
    <property type="molecule type" value="Genomic_DNA"/>
</dbReference>
<dbReference type="RefSeq" id="WP_011926110.1">
    <property type="nucleotide sequence ID" value="NC_009445.1"/>
</dbReference>
<dbReference type="STRING" id="114615.BRADO3147"/>
<dbReference type="KEGG" id="bra:BRADO3147"/>
<dbReference type="eggNOG" id="COG1671">
    <property type="taxonomic scope" value="Bacteria"/>
</dbReference>
<dbReference type="HOGENOM" id="CLU_106619_2_1_5"/>
<dbReference type="OrthoDB" id="9798918at2"/>
<dbReference type="Proteomes" id="UP000001994">
    <property type="component" value="Chromosome"/>
</dbReference>
<dbReference type="CDD" id="cd18720">
    <property type="entry name" value="PIN_YqxD-like"/>
    <property type="match status" value="1"/>
</dbReference>
<dbReference type="HAMAP" id="MF_00489">
    <property type="entry name" value="UPF0178"/>
    <property type="match status" value="1"/>
</dbReference>
<dbReference type="InterPro" id="IPR003791">
    <property type="entry name" value="UPF0178"/>
</dbReference>
<dbReference type="NCBIfam" id="NF001095">
    <property type="entry name" value="PRK00124.1"/>
    <property type="match status" value="1"/>
</dbReference>
<dbReference type="PANTHER" id="PTHR35146">
    <property type="entry name" value="UPF0178 PROTEIN YAII"/>
    <property type="match status" value="1"/>
</dbReference>
<dbReference type="PANTHER" id="PTHR35146:SF1">
    <property type="entry name" value="UPF0178 PROTEIN YAII"/>
    <property type="match status" value="1"/>
</dbReference>
<dbReference type="Pfam" id="PF02639">
    <property type="entry name" value="DUF188"/>
    <property type="match status" value="1"/>
</dbReference>
<proteinExistence type="inferred from homology"/>
<sequence length="164" mass="17610">MTTETAPITLYVDADACPVKDEIYRVAIRHGLAVIVVAGGFIRVPDDPLITRVAAGSGMDAADDWIAEHTGPDDIVITADIPLASRCVKAGSAVIAPNGKPFTEESMGMTLAVRNLMTDLRSSGEVTGGPRSFTPRDRSTFLSTLDTTIRRVQRQRAARIQQQS</sequence>
<keyword id="KW-1185">Reference proteome</keyword>
<protein>
    <recommendedName>
        <fullName evidence="1">UPF0178 protein BRADO3147</fullName>
    </recommendedName>
</protein>
<evidence type="ECO:0000255" key="1">
    <source>
        <dbReference type="HAMAP-Rule" id="MF_00489"/>
    </source>
</evidence>